<organism>
    <name type="scientific">Escherichia coli O157:H7 (strain EC4115 / EHEC)</name>
    <dbReference type="NCBI Taxonomy" id="444450"/>
    <lineage>
        <taxon>Bacteria</taxon>
        <taxon>Pseudomonadati</taxon>
        <taxon>Pseudomonadota</taxon>
        <taxon>Gammaproteobacteria</taxon>
        <taxon>Enterobacterales</taxon>
        <taxon>Enterobacteriaceae</taxon>
        <taxon>Escherichia</taxon>
    </lineage>
</organism>
<evidence type="ECO:0000255" key="1">
    <source>
        <dbReference type="HAMAP-Rule" id="MF_00095"/>
    </source>
</evidence>
<gene>
    <name evidence="1" type="primary">sfsA</name>
    <name type="ordered locus">ECH74115_0155</name>
</gene>
<accession>B5YZI3</accession>
<comment type="function">
    <text evidence="1">Binds to DNA non-specifically. Could be a regulatory factor involved in maltose metabolism.</text>
</comment>
<comment type="similarity">
    <text evidence="1">Belongs to the SfsA family.</text>
</comment>
<keyword id="KW-0238">DNA-binding</keyword>
<feature type="chain" id="PRO_1000093570" description="Sugar fermentation stimulation protein A">
    <location>
        <begin position="1"/>
        <end position="234"/>
    </location>
</feature>
<feature type="DNA-binding region" description="H-T-H motif" evidence="1">
    <location>
        <begin position="201"/>
        <end position="220"/>
    </location>
</feature>
<name>SFSA_ECO5E</name>
<proteinExistence type="inferred from homology"/>
<dbReference type="EMBL" id="CP001164">
    <property type="protein sequence ID" value="ACI39162.1"/>
    <property type="molecule type" value="Genomic_DNA"/>
</dbReference>
<dbReference type="RefSeq" id="WP_000396036.1">
    <property type="nucleotide sequence ID" value="NC_011353.1"/>
</dbReference>
<dbReference type="SMR" id="B5YZI3"/>
<dbReference type="GeneID" id="75202039"/>
<dbReference type="KEGG" id="ecf:ECH74115_0155"/>
<dbReference type="HOGENOM" id="CLU_052299_2_0_6"/>
<dbReference type="GO" id="GO:0003677">
    <property type="term" value="F:DNA binding"/>
    <property type="evidence" value="ECO:0007669"/>
    <property type="project" value="UniProtKB-KW"/>
</dbReference>
<dbReference type="CDD" id="cd22359">
    <property type="entry name" value="SfsA-like_bacterial"/>
    <property type="match status" value="1"/>
</dbReference>
<dbReference type="FunFam" id="2.40.50.580:FF:000001">
    <property type="entry name" value="Sugar fermentation stimulation protein A"/>
    <property type="match status" value="1"/>
</dbReference>
<dbReference type="FunFam" id="3.40.1350.60:FF:000001">
    <property type="entry name" value="Sugar fermentation stimulation protein A"/>
    <property type="match status" value="1"/>
</dbReference>
<dbReference type="Gene3D" id="2.40.50.580">
    <property type="match status" value="1"/>
</dbReference>
<dbReference type="Gene3D" id="3.40.1350.60">
    <property type="match status" value="1"/>
</dbReference>
<dbReference type="HAMAP" id="MF_00095">
    <property type="entry name" value="SfsA"/>
    <property type="match status" value="1"/>
</dbReference>
<dbReference type="InterPro" id="IPR005224">
    <property type="entry name" value="SfsA"/>
</dbReference>
<dbReference type="InterPro" id="IPR040452">
    <property type="entry name" value="SfsA_C"/>
</dbReference>
<dbReference type="InterPro" id="IPR041465">
    <property type="entry name" value="SfsA_N"/>
</dbReference>
<dbReference type="NCBIfam" id="TIGR00230">
    <property type="entry name" value="sfsA"/>
    <property type="match status" value="1"/>
</dbReference>
<dbReference type="PANTHER" id="PTHR30545">
    <property type="entry name" value="SUGAR FERMENTATION STIMULATION PROTEIN A"/>
    <property type="match status" value="1"/>
</dbReference>
<dbReference type="PANTHER" id="PTHR30545:SF2">
    <property type="entry name" value="SUGAR FERMENTATION STIMULATION PROTEIN A"/>
    <property type="match status" value="1"/>
</dbReference>
<dbReference type="Pfam" id="PF03749">
    <property type="entry name" value="SfsA"/>
    <property type="match status" value="1"/>
</dbReference>
<dbReference type="Pfam" id="PF17746">
    <property type="entry name" value="SfsA_N"/>
    <property type="match status" value="1"/>
</dbReference>
<sequence length="234" mass="26229">MEFSPPLQRATLIQRYKRFLADVITPDGRELTLHCPNTGAMTGCATPGDTVWYSTSDNTKRKYPHTWELTQSQSGAFICVNTLWANRLTKEAILNESISELSGYSSLKSEVKYGAERSRIDFMLQADSRPDCYIEVKSVTLAENEQGYFPDAVTERGQKHLRELMSVAAEGQRAVIFFAVLHSAITRFSPARHIDEKYAQLLSEAQQRGVEILAYKAEISAEGMALKKSLPVTL</sequence>
<protein>
    <recommendedName>
        <fullName evidence="1">Sugar fermentation stimulation protein A</fullName>
    </recommendedName>
</protein>
<reference key="1">
    <citation type="journal article" date="2011" name="Proc. Natl. Acad. Sci. U.S.A.">
        <title>Genomic anatomy of Escherichia coli O157:H7 outbreaks.</title>
        <authorList>
            <person name="Eppinger M."/>
            <person name="Mammel M.K."/>
            <person name="Leclerc J.E."/>
            <person name="Ravel J."/>
            <person name="Cebula T.A."/>
        </authorList>
    </citation>
    <scope>NUCLEOTIDE SEQUENCE [LARGE SCALE GENOMIC DNA]</scope>
    <source>
        <strain>EC4115 / EHEC</strain>
    </source>
</reference>